<organism>
    <name type="scientific">African swine fever virus (isolate Pig/Portugal/Lis 60/1960)</name>
    <name type="common">ASFV</name>
    <dbReference type="NCBI Taxonomy" id="82815"/>
    <lineage>
        <taxon>Viruses</taxon>
        <taxon>Varidnaviria</taxon>
        <taxon>Bamfordvirae</taxon>
        <taxon>Nucleocytoviricota</taxon>
        <taxon>Pokkesviricetes</taxon>
        <taxon>Asfuvirales</taxon>
        <taxon>Asfarviridae</taxon>
        <taxon>Asfivirus</taxon>
        <taxon>African swine fever virus</taxon>
    </lineage>
</organism>
<sequence length="224" mass="26618">MFPKINTIDPYISLRLFEVKPKYVGYSSIDARNQSFAIHGIKNYEKFSNAGFFYTSPTEITCYCCGMKFCNWLYEKHPLQVHGFWSRNCGFMRATLGIIGLKKMIDSYNDYYNNEVFVKHKNRVYTHKRLEDMGFSKPFMRFILANAFIPPYRKYIHKIILNERYFTFKFAAHLLSFHKVNLDNQTTYCMTCGIEPIKKDENFCNACKTLNYKHYKTLNFSVKL</sequence>
<protein>
    <recommendedName>
        <fullName>IAP-like protein p27</fullName>
    </recommendedName>
</protein>
<accession>P69184</accession>
<accession>O12627</accession>
<accession>O12628</accession>
<accession>O12629</accession>
<accession>O12630</accession>
<accession>O12631</accession>
<accession>O12904</accession>
<accession>O12905</accession>
<accession>O12906</accession>
<accession>O12907</accession>
<accession>O12908</accession>
<accession>Q65138</accession>
<organismHost>
    <name type="scientific">Ornithodoros</name>
    <name type="common">relapsing fever ticks</name>
    <dbReference type="NCBI Taxonomy" id="6937"/>
</organismHost>
<organismHost>
    <name type="scientific">Sus scrofa</name>
    <name type="common">Pig</name>
    <dbReference type="NCBI Taxonomy" id="9823"/>
</organismHost>
<keyword id="KW-1074">Activation of host NF-kappa-B by virus</keyword>
<keyword id="KW-1035">Host cytoplasm</keyword>
<keyword id="KW-0945">Host-virus interaction</keyword>
<keyword id="KW-1085">Inhibition of host caspases by virus</keyword>
<keyword id="KW-0426">Late protein</keyword>
<keyword id="KW-0479">Metal-binding</keyword>
<keyword id="KW-1119">Modulation of host cell apoptosis by virus</keyword>
<keyword id="KW-0946">Virion</keyword>
<keyword id="KW-0862">Zinc</keyword>
<dbReference type="EMBL" id="U91736">
    <property type="protein sequence ID" value="AAB58391.1"/>
    <property type="molecule type" value="Genomic_DNA"/>
</dbReference>
<dbReference type="SMR" id="P69184"/>
<dbReference type="KEGG" id="vg:22220415"/>
<dbReference type="GO" id="GO:0030430">
    <property type="term" value="C:host cell cytoplasm"/>
    <property type="evidence" value="ECO:0007669"/>
    <property type="project" value="UniProtKB-SubCell"/>
</dbReference>
<dbReference type="GO" id="GO:0044423">
    <property type="term" value="C:virion component"/>
    <property type="evidence" value="ECO:0007669"/>
    <property type="project" value="UniProtKB-KW"/>
</dbReference>
<dbReference type="GO" id="GO:0046872">
    <property type="term" value="F:metal ion binding"/>
    <property type="evidence" value="ECO:0007669"/>
    <property type="project" value="UniProtKB-KW"/>
</dbReference>
<dbReference type="GO" id="GO:0085033">
    <property type="term" value="P:symbiont-mediated activation of host NF-kappaB cascade"/>
    <property type="evidence" value="ECO:0007669"/>
    <property type="project" value="UniProtKB-KW"/>
</dbReference>
<dbReference type="GO" id="GO:0033668">
    <property type="term" value="P:symbiont-mediated suppression of host apoptosis"/>
    <property type="evidence" value="ECO:0007669"/>
    <property type="project" value="UniProtKB-KW"/>
</dbReference>
<dbReference type="CDD" id="cd00022">
    <property type="entry name" value="BIR"/>
    <property type="match status" value="1"/>
</dbReference>
<dbReference type="FunFam" id="1.10.1170.10:FF:000014">
    <property type="entry name" value="IAP-like protein p27"/>
    <property type="match status" value="1"/>
</dbReference>
<dbReference type="Gene3D" id="1.10.1170.10">
    <property type="entry name" value="Inhibitor Of Apoptosis Protein (2mihbC-IAP-1), Chain A"/>
    <property type="match status" value="1"/>
</dbReference>
<dbReference type="InterPro" id="IPR010549">
    <property type="entry name" value="ASFV_p27_C"/>
</dbReference>
<dbReference type="InterPro" id="IPR001370">
    <property type="entry name" value="BIR_rpt"/>
</dbReference>
<dbReference type="Pfam" id="PF06556">
    <property type="entry name" value="ASFV_p27"/>
    <property type="match status" value="1"/>
</dbReference>
<dbReference type="Pfam" id="PF00653">
    <property type="entry name" value="BIR"/>
    <property type="match status" value="1"/>
</dbReference>
<dbReference type="SMART" id="SM00238">
    <property type="entry name" value="BIR"/>
    <property type="match status" value="1"/>
</dbReference>
<dbReference type="SUPFAM" id="SSF57924">
    <property type="entry name" value="Inhibitor of apoptosis (IAP) repeat"/>
    <property type="match status" value="1"/>
</dbReference>
<dbReference type="PROSITE" id="PS01282">
    <property type="entry name" value="BIR_REPEAT_1"/>
    <property type="match status" value="1"/>
</dbReference>
<dbReference type="PROSITE" id="PS50143">
    <property type="entry name" value="BIR_REPEAT_2"/>
    <property type="match status" value="1"/>
</dbReference>
<comment type="function">
    <text evidence="1">Prevents apoptosis of host cell by inhibiting caspase-3/CASP3 activation to promote the viral replication. Also induces the activation of host NF-kappaB.</text>
</comment>
<comment type="subunit">
    <text evidence="1">Interacts with subunit p17 of host CASP3.</text>
</comment>
<comment type="subcellular location">
    <subcellularLocation>
        <location evidence="1">Host cytoplasm</location>
    </subcellularLocation>
    <subcellularLocation>
        <location evidence="1">Virion</location>
    </subcellularLocation>
    <text evidence="1">Probably accumulates in the perinuclear cytoplasmic viral factories. Found in association with viral nucleoid.</text>
</comment>
<comment type="induction">
    <text evidence="3">Expressed in the late phase of the viral replicative cycle.</text>
</comment>
<comment type="similarity">
    <text evidence="3">Belongs to the asfivirus IAP family.</text>
</comment>
<reference key="1">
    <citation type="journal article" date="1997" name="Virology">
        <title>A BIR motif containing gene of African swine fever virus, 4CL, is nonessential for growth in vitro and viral virulence.</title>
        <authorList>
            <person name="Neilan J.G."/>
            <person name="Lu Z."/>
            <person name="Kutish G.F."/>
            <person name="Zsak L."/>
            <person name="Burrage T.G."/>
            <person name="Borca M.V."/>
            <person name="Carrillo C."/>
            <person name="Rock D.L."/>
        </authorList>
    </citation>
    <scope>NUCLEOTIDE SEQUENCE [GENOMIC DNA]</scope>
</reference>
<evidence type="ECO:0000250" key="1">
    <source>
        <dbReference type="UniProtKB" id="P69180"/>
    </source>
</evidence>
<evidence type="ECO:0000255" key="2">
    <source>
        <dbReference type="PROSITE-ProRule" id="PRU00029"/>
    </source>
</evidence>
<evidence type="ECO:0000305" key="3"/>
<proteinExistence type="inferred from homology"/>
<feature type="chain" id="PRO_0000122380" description="IAP-like protein p27">
    <location>
        <begin position="1"/>
        <end position="224"/>
    </location>
</feature>
<feature type="repeat" description="BIR">
    <location>
        <begin position="29"/>
        <end position="92"/>
    </location>
</feature>
<feature type="binding site" evidence="2">
    <location>
        <position position="62"/>
    </location>
    <ligand>
        <name>Zn(2+)</name>
        <dbReference type="ChEBI" id="CHEBI:29105"/>
    </ligand>
</feature>
<feature type="binding site" evidence="2">
    <location>
        <position position="65"/>
    </location>
    <ligand>
        <name>Zn(2+)</name>
        <dbReference type="ChEBI" id="CHEBI:29105"/>
    </ligand>
</feature>
<feature type="binding site" evidence="2">
    <location>
        <position position="82"/>
    </location>
    <ligand>
        <name>Zn(2+)</name>
        <dbReference type="ChEBI" id="CHEBI:29105"/>
    </ligand>
</feature>
<feature type="binding site" evidence="2">
    <location>
        <position position="89"/>
    </location>
    <ligand>
        <name>Zn(2+)</name>
        <dbReference type="ChEBI" id="CHEBI:29105"/>
    </ligand>
</feature>
<gene>
    <name type="primary">p27</name>
    <name type="ORF">4CL</name>
</gene>
<name>IAP_ASFL6</name>